<comment type="function">
    <text evidence="1">Functions as ATP-binding component of the Arp2/3 complex which is involved in regulation of actin polymerization and together with an activating nucleation-promoting factor (NPF) mediates the formation of branched actin networks. Seems to contact the pointed end of the daughter actin filament. Regulates the directionality of cell expansion by regulating the actin organization, and thus the microtubules distribution and the fusion of small vacuoles (By similarity).</text>
</comment>
<comment type="subunit">
    <text evidence="1">Component of the Arp2/3 complex.</text>
</comment>
<comment type="subcellular location">
    <subcellularLocation>
        <location evidence="1">Cytoplasm</location>
        <location evidence="1">Cytoskeleton</location>
    </subcellularLocation>
</comment>
<comment type="similarity">
    <text evidence="2">Belongs to the actin family. ARP3 subfamily.</text>
</comment>
<keyword id="KW-0009">Actin-binding</keyword>
<keyword id="KW-0067">ATP-binding</keyword>
<keyword id="KW-0963">Cytoplasm</keyword>
<keyword id="KW-0206">Cytoskeleton</keyword>
<keyword id="KW-0217">Developmental protein</keyword>
<keyword id="KW-0547">Nucleotide-binding</keyword>
<keyword id="KW-1185">Reference proteome</keyword>
<accession>Q6K908</accession>
<accession>A3A8N7</accession>
<accession>B9F0V9</accession>
<reference key="1">
    <citation type="journal article" date="2005" name="Nature">
        <title>The map-based sequence of the rice genome.</title>
        <authorList>
            <consortium name="International rice genome sequencing project (IRGSP)"/>
        </authorList>
    </citation>
    <scope>NUCLEOTIDE SEQUENCE [LARGE SCALE GENOMIC DNA]</scope>
    <source>
        <strain>cv. Nipponbare</strain>
    </source>
</reference>
<reference key="2">
    <citation type="journal article" date="2008" name="Nucleic Acids Res.">
        <title>The rice annotation project database (RAP-DB): 2008 update.</title>
        <authorList>
            <consortium name="The rice annotation project (RAP)"/>
        </authorList>
    </citation>
    <scope>GENOME REANNOTATION</scope>
    <source>
        <strain>cv. Nipponbare</strain>
    </source>
</reference>
<reference key="3">
    <citation type="journal article" date="2013" name="Rice">
        <title>Improvement of the Oryza sativa Nipponbare reference genome using next generation sequence and optical map data.</title>
        <authorList>
            <person name="Kawahara Y."/>
            <person name="de la Bastide M."/>
            <person name="Hamilton J.P."/>
            <person name="Kanamori H."/>
            <person name="McCombie W.R."/>
            <person name="Ouyang S."/>
            <person name="Schwartz D.C."/>
            <person name="Tanaka T."/>
            <person name="Wu J."/>
            <person name="Zhou S."/>
            <person name="Childs K.L."/>
            <person name="Davidson R.M."/>
            <person name="Lin H."/>
            <person name="Quesada-Ocampo L."/>
            <person name="Vaillancourt B."/>
            <person name="Sakai H."/>
            <person name="Lee S.S."/>
            <person name="Kim J."/>
            <person name="Numa H."/>
            <person name="Itoh T."/>
            <person name="Buell C.R."/>
            <person name="Matsumoto T."/>
        </authorList>
    </citation>
    <scope>GENOME REANNOTATION</scope>
    <source>
        <strain>cv. Nipponbare</strain>
    </source>
</reference>
<reference key="4">
    <citation type="journal article" date="2005" name="PLoS Biol.">
        <title>The genomes of Oryza sativa: a history of duplications.</title>
        <authorList>
            <person name="Yu J."/>
            <person name="Wang J."/>
            <person name="Lin W."/>
            <person name="Li S."/>
            <person name="Li H."/>
            <person name="Zhou J."/>
            <person name="Ni P."/>
            <person name="Dong W."/>
            <person name="Hu S."/>
            <person name="Zeng C."/>
            <person name="Zhang J."/>
            <person name="Zhang Y."/>
            <person name="Li R."/>
            <person name="Xu Z."/>
            <person name="Li S."/>
            <person name="Li X."/>
            <person name="Zheng H."/>
            <person name="Cong L."/>
            <person name="Lin L."/>
            <person name="Yin J."/>
            <person name="Geng J."/>
            <person name="Li G."/>
            <person name="Shi J."/>
            <person name="Liu J."/>
            <person name="Lv H."/>
            <person name="Li J."/>
            <person name="Wang J."/>
            <person name="Deng Y."/>
            <person name="Ran L."/>
            <person name="Shi X."/>
            <person name="Wang X."/>
            <person name="Wu Q."/>
            <person name="Li C."/>
            <person name="Ren X."/>
            <person name="Wang J."/>
            <person name="Wang X."/>
            <person name="Li D."/>
            <person name="Liu D."/>
            <person name="Zhang X."/>
            <person name="Ji Z."/>
            <person name="Zhao W."/>
            <person name="Sun Y."/>
            <person name="Zhang Z."/>
            <person name="Bao J."/>
            <person name="Han Y."/>
            <person name="Dong L."/>
            <person name="Ji J."/>
            <person name="Chen P."/>
            <person name="Wu S."/>
            <person name="Liu J."/>
            <person name="Xiao Y."/>
            <person name="Bu D."/>
            <person name="Tan J."/>
            <person name="Yang L."/>
            <person name="Ye C."/>
            <person name="Zhang J."/>
            <person name="Xu J."/>
            <person name="Zhou Y."/>
            <person name="Yu Y."/>
            <person name="Zhang B."/>
            <person name="Zhuang S."/>
            <person name="Wei H."/>
            <person name="Liu B."/>
            <person name="Lei M."/>
            <person name="Yu H."/>
            <person name="Li Y."/>
            <person name="Xu H."/>
            <person name="Wei S."/>
            <person name="He X."/>
            <person name="Fang L."/>
            <person name="Zhang Z."/>
            <person name="Zhang Y."/>
            <person name="Huang X."/>
            <person name="Su Z."/>
            <person name="Tong W."/>
            <person name="Li J."/>
            <person name="Tong Z."/>
            <person name="Li S."/>
            <person name="Ye J."/>
            <person name="Wang L."/>
            <person name="Fang L."/>
            <person name="Lei T."/>
            <person name="Chen C.-S."/>
            <person name="Chen H.-C."/>
            <person name="Xu Z."/>
            <person name="Li H."/>
            <person name="Huang H."/>
            <person name="Zhang F."/>
            <person name="Xu H."/>
            <person name="Li N."/>
            <person name="Zhao C."/>
            <person name="Li S."/>
            <person name="Dong L."/>
            <person name="Huang Y."/>
            <person name="Li L."/>
            <person name="Xi Y."/>
            <person name="Qi Q."/>
            <person name="Li W."/>
            <person name="Zhang B."/>
            <person name="Hu W."/>
            <person name="Zhang Y."/>
            <person name="Tian X."/>
            <person name="Jiao Y."/>
            <person name="Liang X."/>
            <person name="Jin J."/>
            <person name="Gao L."/>
            <person name="Zheng W."/>
            <person name="Hao B."/>
            <person name="Liu S.-M."/>
            <person name="Wang W."/>
            <person name="Yuan L."/>
            <person name="Cao M."/>
            <person name="McDermott J."/>
            <person name="Samudrala R."/>
            <person name="Wang J."/>
            <person name="Wong G.K.-S."/>
            <person name="Yang H."/>
        </authorList>
    </citation>
    <scope>NUCLEOTIDE SEQUENCE [LARGE SCALE GENOMIC DNA]</scope>
    <source>
        <strain>cv. Nipponbare</strain>
    </source>
</reference>
<reference key="5">
    <citation type="journal article" date="2003" name="Science">
        <title>Collection, mapping, and annotation of over 28,000 cDNA clones from japonica rice.</title>
        <authorList>
            <consortium name="The rice full-length cDNA consortium"/>
        </authorList>
    </citation>
    <scope>NUCLEOTIDE SEQUENCE [LARGE SCALE MRNA]</scope>
    <source>
        <strain>cv. Nipponbare</strain>
    </source>
</reference>
<reference key="6">
    <citation type="journal article" date="2004" name="Trends Plant Sci.">
        <title>Plant actin-related proteins.</title>
        <authorList>
            <person name="Kandasamy M.K."/>
            <person name="Deal R.B."/>
            <person name="McKinney E.C."/>
            <person name="Meagher R.B."/>
        </authorList>
    </citation>
    <scope>REVIEW</scope>
    <scope>GENE FAMILY</scope>
    <scope>NOMENCLATURE</scope>
</reference>
<dbReference type="EMBL" id="AP004092">
    <property type="protein sequence ID" value="BAD21625.1"/>
    <property type="molecule type" value="Genomic_DNA"/>
</dbReference>
<dbReference type="EMBL" id="AP008208">
    <property type="protein sequence ID" value="BAF09237.1"/>
    <property type="molecule type" value="Genomic_DNA"/>
</dbReference>
<dbReference type="EMBL" id="AP014958">
    <property type="protein sequence ID" value="BAS79560.1"/>
    <property type="molecule type" value="Genomic_DNA"/>
</dbReference>
<dbReference type="EMBL" id="CM000139">
    <property type="protein sequence ID" value="EEE57301.1"/>
    <property type="molecule type" value="Genomic_DNA"/>
</dbReference>
<dbReference type="EMBL" id="AK101163">
    <property type="status" value="NOT_ANNOTATED_CDS"/>
    <property type="molecule type" value="mRNA"/>
</dbReference>
<dbReference type="RefSeq" id="XP_015623040.1">
    <property type="nucleotide sequence ID" value="XM_015767554.1"/>
</dbReference>
<dbReference type="SMR" id="Q6K908"/>
<dbReference type="FunCoup" id="Q6K908">
    <property type="interactions" value="3155"/>
</dbReference>
<dbReference type="STRING" id="39947.Q6K908"/>
<dbReference type="PaxDb" id="39947-Q6K908"/>
<dbReference type="EnsemblPlants" id="Os02t0596900-01">
    <property type="protein sequence ID" value="Os02t0596900-01"/>
    <property type="gene ID" value="Os02g0596900"/>
</dbReference>
<dbReference type="Gramene" id="Os02t0596900-01">
    <property type="protein sequence ID" value="Os02t0596900-01"/>
    <property type="gene ID" value="Os02g0596900"/>
</dbReference>
<dbReference type="KEGG" id="dosa:Os02g0596900"/>
<dbReference type="eggNOG" id="KOG0678">
    <property type="taxonomic scope" value="Eukaryota"/>
</dbReference>
<dbReference type="HOGENOM" id="CLU_027965_3_0_1"/>
<dbReference type="InParanoid" id="Q6K908"/>
<dbReference type="OMA" id="GIHYPIR"/>
<dbReference type="OrthoDB" id="421448at2759"/>
<dbReference type="Proteomes" id="UP000000763">
    <property type="component" value="Chromosome 2"/>
</dbReference>
<dbReference type="Proteomes" id="UP000007752">
    <property type="component" value="Chromosome 2"/>
</dbReference>
<dbReference type="Proteomes" id="UP000059680">
    <property type="component" value="Chromosome 2"/>
</dbReference>
<dbReference type="GO" id="GO:0005885">
    <property type="term" value="C:Arp2/3 protein complex"/>
    <property type="evidence" value="ECO:0000318"/>
    <property type="project" value="GO_Central"/>
</dbReference>
<dbReference type="GO" id="GO:0005737">
    <property type="term" value="C:cytoplasm"/>
    <property type="evidence" value="ECO:0007669"/>
    <property type="project" value="UniProtKB-KW"/>
</dbReference>
<dbReference type="GO" id="GO:0003779">
    <property type="term" value="F:actin binding"/>
    <property type="evidence" value="ECO:0007669"/>
    <property type="project" value="UniProtKB-KW"/>
</dbReference>
<dbReference type="GO" id="GO:0005524">
    <property type="term" value="F:ATP binding"/>
    <property type="evidence" value="ECO:0007669"/>
    <property type="project" value="UniProtKB-KW"/>
</dbReference>
<dbReference type="GO" id="GO:0034314">
    <property type="term" value="P:Arp2/3 complex-mediated actin nucleation"/>
    <property type="evidence" value="ECO:0000318"/>
    <property type="project" value="GO_Central"/>
</dbReference>
<dbReference type="CDD" id="cd10221">
    <property type="entry name" value="ASKHA_NBD_Arp3-like"/>
    <property type="match status" value="1"/>
</dbReference>
<dbReference type="FunFam" id="3.30.420.40:FF:000029">
    <property type="entry name" value="Actin-related protein 3"/>
    <property type="match status" value="1"/>
</dbReference>
<dbReference type="FunFam" id="3.30.420.40:FF:000315">
    <property type="entry name" value="Actin-related protein 3"/>
    <property type="match status" value="1"/>
</dbReference>
<dbReference type="FunFam" id="3.30.420.40:FF:000803">
    <property type="entry name" value="Actin-related protein 3"/>
    <property type="match status" value="1"/>
</dbReference>
<dbReference type="FunFam" id="3.90.640.10:FF:000006">
    <property type="entry name" value="Actin-related protein 3 (ARP3)"/>
    <property type="match status" value="1"/>
</dbReference>
<dbReference type="Gene3D" id="3.30.420.40">
    <property type="match status" value="2"/>
</dbReference>
<dbReference type="Gene3D" id="3.90.640.10">
    <property type="entry name" value="Actin, Chain A, domain 4"/>
    <property type="match status" value="1"/>
</dbReference>
<dbReference type="InterPro" id="IPR004000">
    <property type="entry name" value="Actin"/>
</dbReference>
<dbReference type="InterPro" id="IPR043129">
    <property type="entry name" value="ATPase_NBD"/>
</dbReference>
<dbReference type="PANTHER" id="PTHR11937">
    <property type="entry name" value="ACTIN"/>
    <property type="match status" value="1"/>
</dbReference>
<dbReference type="Pfam" id="PF00022">
    <property type="entry name" value="Actin"/>
    <property type="match status" value="1"/>
</dbReference>
<dbReference type="SMART" id="SM00268">
    <property type="entry name" value="ACTIN"/>
    <property type="match status" value="1"/>
</dbReference>
<dbReference type="SUPFAM" id="SSF53067">
    <property type="entry name" value="Actin-like ATPase domain"/>
    <property type="match status" value="2"/>
</dbReference>
<name>ARP3_ORYSJ</name>
<proteinExistence type="evidence at transcript level"/>
<sequence>MDAASRPAVVIDNGTGYTKMGFAGNVEPCFITPTVVAVNDTFAGQTRANTTKGNWMAQHSAGVMADLDFFIGEDALARSRSSNTYNLSYPIHNGQVENWDTMERFWQQCIFNYLRCDPEDHYFLLTESPLTPPETREYTGEIMFETFNVPGLYIACQPVLALAAGYTTTKCEMTGVVVDVGDGATHIVPVADGYVIGSSIRSIPITGKDVTQFIQQLLKERGEHIPPEESFDVARRVKEMYCYTCSDIVKEFNKHDREPNKYIKHWSGIKPKTGAKYTCDIGYERFLGPEIFFHPEIYNNDFTTPLHVVIDKCIQSSPIDTRRALYKNIVLSGGSTMFKDFHRRLQRDLKKIVDARVLASNARLGGDAKAQPIEVNVVSHPIQRYAVWFGGSVLASTAEFYEACHTKAEYEEYGASICRTNPVFKGMY</sequence>
<protein>
    <recommendedName>
        <fullName>Actin-related protein 3</fullName>
    </recommendedName>
</protein>
<evidence type="ECO:0000250" key="1"/>
<evidence type="ECO:0000305" key="2"/>
<evidence type="ECO:0000312" key="3">
    <source>
        <dbReference type="EMBL" id="EEE57301.1"/>
    </source>
</evidence>
<gene>
    <name type="primary">ARP3</name>
    <name type="ordered locus">Os02g0596900</name>
    <name type="ordered locus">LOC_Os02g38340</name>
    <name type="ORF">OJ1568_B05.15</name>
    <name type="ORF">OsJ_007159</name>
    <name evidence="3" type="ORF">OsJ_07378</name>
</gene>
<organism>
    <name type="scientific">Oryza sativa subsp. japonica</name>
    <name type="common">Rice</name>
    <dbReference type="NCBI Taxonomy" id="39947"/>
    <lineage>
        <taxon>Eukaryota</taxon>
        <taxon>Viridiplantae</taxon>
        <taxon>Streptophyta</taxon>
        <taxon>Embryophyta</taxon>
        <taxon>Tracheophyta</taxon>
        <taxon>Spermatophyta</taxon>
        <taxon>Magnoliopsida</taxon>
        <taxon>Liliopsida</taxon>
        <taxon>Poales</taxon>
        <taxon>Poaceae</taxon>
        <taxon>BOP clade</taxon>
        <taxon>Oryzoideae</taxon>
        <taxon>Oryzeae</taxon>
        <taxon>Oryzinae</taxon>
        <taxon>Oryza</taxon>
        <taxon>Oryza sativa</taxon>
    </lineage>
</organism>
<feature type="chain" id="PRO_0000320526" description="Actin-related protein 3">
    <location>
        <begin position="1"/>
        <end position="428"/>
    </location>
</feature>
<feature type="sequence conflict" description="In Ref. 5; AK101163." evidence="2" ref="5">
    <location>
        <position position="197"/>
    </location>
</feature>
<feature type="sequence conflict" description="In Ref. 5; AK101163." evidence="2" ref="5">
    <original>P</original>
    <variation>T</variation>
    <location>
        <position position="422"/>
    </location>
</feature>